<evidence type="ECO:0000255" key="1">
    <source>
        <dbReference type="HAMAP-Rule" id="MF_00096"/>
    </source>
</evidence>
<name>MUTS_VARPS</name>
<reference key="1">
    <citation type="journal article" date="2011" name="J. Bacteriol.">
        <title>Complete genome sequence of the metabolically versatile plant growth-promoting endophyte, Variovorax paradoxus S110.</title>
        <authorList>
            <person name="Han J.I."/>
            <person name="Choi H.K."/>
            <person name="Lee S.W."/>
            <person name="Orwin P.M."/>
            <person name="Kim J."/>
            <person name="Laroe S.L."/>
            <person name="Kim T.G."/>
            <person name="O'Neil J."/>
            <person name="Leadbetter J.R."/>
            <person name="Lee S.Y."/>
            <person name="Hur C.G."/>
            <person name="Spain J.C."/>
            <person name="Ovchinnikova G."/>
            <person name="Goodwin L."/>
            <person name="Han C."/>
        </authorList>
    </citation>
    <scope>NUCLEOTIDE SEQUENCE [LARGE SCALE GENOMIC DNA]</scope>
    <source>
        <strain>S110</strain>
    </source>
</reference>
<sequence>MKTTTAQPSPSTSDFSGHTPMMAQYLGLKANHPDTLLFYRMGDFYELFWADAEKAARLLDITLTQRGQSAGQPVVMCGVPFHAVDTYLARLIKLGESVAICEQVGEVGASKGPVERKVVRVVTPGTLTDSELLNDKSESLLLAVHAGTRNFCGLAWLSVTGAELRLAECPADALEAWIARIAPSELLYSAEVTPAFEQRLKAARAATPFTLSIRPAWQFDGGLGERKLSEQMGSNSLAAWNAESLANAHAAAAALLGYAEHTQGRALSHVQRLSVERDGDLVELPPTTRRNLELVQTLRGEDSPTLFSLLDTCMTGMGSRLLKRWLLSPRRDRGEAQARLEAIAALQSTVLGGTAAPWRTLREQLKNTSDVERIAARIALRQVRPRELLALRLALAKAEQLAPALPASGELLGGIIERLAPPSGCADLLASAIKPDPSALVRDGGVIATGHDAELDELRAISENCDDFLLKLEVSERERTGISNLRVQFNRVHGFYIEVTQSALSKVPDNYRRRQTLKNAERFITPELKAFEDKALSAQDRALAREKWLYEQLLDALQPSVPALTQLAGAIATLDALCALAERSHTLHWRAPSFVSHPCIEIQQGRHPVVEARLAEKSSGGFIANDTQLGPQQRMQVITGPNMGGKSTYMRQVAIIVLLASIGSHVPAAACRLGPIDAIHTRIGAADDLANAQSTFMLEMTEAAQILHSATAQSLVLMDEIGRGTSTFDGLALAAGIAAQLHDRSKAFTLFATHYFELTEFPATHHCAVNMHVSATEAGRDIVFLHEMQPGPASKSYGIQVARLAGMPAAVVNHARQALEALESQHAQTRAQVDLFAPPPAAETPMASAVESALAALDPDAMTPREALDALYALQKLNTRERGAA</sequence>
<dbReference type="EMBL" id="CP001635">
    <property type="protein sequence ID" value="ACS20206.1"/>
    <property type="molecule type" value="Genomic_DNA"/>
</dbReference>
<dbReference type="SMR" id="C5CTL8"/>
<dbReference type="STRING" id="543728.Vapar_3589"/>
<dbReference type="KEGG" id="vap:Vapar_3589"/>
<dbReference type="eggNOG" id="COG0249">
    <property type="taxonomic scope" value="Bacteria"/>
</dbReference>
<dbReference type="HOGENOM" id="CLU_002472_4_0_4"/>
<dbReference type="OrthoDB" id="9802448at2"/>
<dbReference type="GO" id="GO:0005829">
    <property type="term" value="C:cytosol"/>
    <property type="evidence" value="ECO:0007669"/>
    <property type="project" value="TreeGrafter"/>
</dbReference>
<dbReference type="GO" id="GO:0005524">
    <property type="term" value="F:ATP binding"/>
    <property type="evidence" value="ECO:0007669"/>
    <property type="project" value="UniProtKB-UniRule"/>
</dbReference>
<dbReference type="GO" id="GO:0140664">
    <property type="term" value="F:ATP-dependent DNA damage sensor activity"/>
    <property type="evidence" value="ECO:0007669"/>
    <property type="project" value="InterPro"/>
</dbReference>
<dbReference type="GO" id="GO:0003684">
    <property type="term" value="F:damaged DNA binding"/>
    <property type="evidence" value="ECO:0007669"/>
    <property type="project" value="UniProtKB-UniRule"/>
</dbReference>
<dbReference type="GO" id="GO:0030983">
    <property type="term" value="F:mismatched DNA binding"/>
    <property type="evidence" value="ECO:0007669"/>
    <property type="project" value="InterPro"/>
</dbReference>
<dbReference type="GO" id="GO:0006298">
    <property type="term" value="P:mismatch repair"/>
    <property type="evidence" value="ECO:0007669"/>
    <property type="project" value="UniProtKB-UniRule"/>
</dbReference>
<dbReference type="FunFam" id="3.40.1170.10:FF:000001">
    <property type="entry name" value="DNA mismatch repair protein MutS"/>
    <property type="match status" value="1"/>
</dbReference>
<dbReference type="Gene3D" id="1.10.1420.10">
    <property type="match status" value="2"/>
</dbReference>
<dbReference type="Gene3D" id="6.10.140.430">
    <property type="match status" value="1"/>
</dbReference>
<dbReference type="Gene3D" id="3.40.1170.10">
    <property type="entry name" value="DNA repair protein MutS, domain I"/>
    <property type="match status" value="1"/>
</dbReference>
<dbReference type="Gene3D" id="3.30.420.110">
    <property type="entry name" value="MutS, connector domain"/>
    <property type="match status" value="1"/>
</dbReference>
<dbReference type="Gene3D" id="3.40.50.300">
    <property type="entry name" value="P-loop containing nucleotide triphosphate hydrolases"/>
    <property type="match status" value="1"/>
</dbReference>
<dbReference type="HAMAP" id="MF_00096">
    <property type="entry name" value="MutS"/>
    <property type="match status" value="1"/>
</dbReference>
<dbReference type="InterPro" id="IPR005748">
    <property type="entry name" value="DNA_mismatch_repair_MutS"/>
</dbReference>
<dbReference type="InterPro" id="IPR007695">
    <property type="entry name" value="DNA_mismatch_repair_MutS-lik_N"/>
</dbReference>
<dbReference type="InterPro" id="IPR017261">
    <property type="entry name" value="DNA_mismatch_repair_MutS/MSH"/>
</dbReference>
<dbReference type="InterPro" id="IPR000432">
    <property type="entry name" value="DNA_mismatch_repair_MutS_C"/>
</dbReference>
<dbReference type="InterPro" id="IPR007861">
    <property type="entry name" value="DNA_mismatch_repair_MutS_clamp"/>
</dbReference>
<dbReference type="InterPro" id="IPR007696">
    <property type="entry name" value="DNA_mismatch_repair_MutS_core"/>
</dbReference>
<dbReference type="InterPro" id="IPR016151">
    <property type="entry name" value="DNA_mismatch_repair_MutS_N"/>
</dbReference>
<dbReference type="InterPro" id="IPR036187">
    <property type="entry name" value="DNA_mismatch_repair_MutS_sf"/>
</dbReference>
<dbReference type="InterPro" id="IPR007860">
    <property type="entry name" value="DNA_mmatch_repair_MutS_con_dom"/>
</dbReference>
<dbReference type="InterPro" id="IPR045076">
    <property type="entry name" value="MutS"/>
</dbReference>
<dbReference type="InterPro" id="IPR036678">
    <property type="entry name" value="MutS_con_dom_sf"/>
</dbReference>
<dbReference type="InterPro" id="IPR027417">
    <property type="entry name" value="P-loop_NTPase"/>
</dbReference>
<dbReference type="NCBIfam" id="TIGR01070">
    <property type="entry name" value="mutS1"/>
    <property type="match status" value="1"/>
</dbReference>
<dbReference type="NCBIfam" id="NF003810">
    <property type="entry name" value="PRK05399.1"/>
    <property type="match status" value="1"/>
</dbReference>
<dbReference type="PANTHER" id="PTHR11361:SF34">
    <property type="entry name" value="DNA MISMATCH REPAIR PROTEIN MSH1, MITOCHONDRIAL"/>
    <property type="match status" value="1"/>
</dbReference>
<dbReference type="PANTHER" id="PTHR11361">
    <property type="entry name" value="DNA MISMATCH REPAIR PROTEIN MUTS FAMILY MEMBER"/>
    <property type="match status" value="1"/>
</dbReference>
<dbReference type="Pfam" id="PF01624">
    <property type="entry name" value="MutS_I"/>
    <property type="match status" value="1"/>
</dbReference>
<dbReference type="Pfam" id="PF05188">
    <property type="entry name" value="MutS_II"/>
    <property type="match status" value="1"/>
</dbReference>
<dbReference type="Pfam" id="PF05192">
    <property type="entry name" value="MutS_III"/>
    <property type="match status" value="1"/>
</dbReference>
<dbReference type="Pfam" id="PF05190">
    <property type="entry name" value="MutS_IV"/>
    <property type="match status" value="1"/>
</dbReference>
<dbReference type="Pfam" id="PF00488">
    <property type="entry name" value="MutS_V"/>
    <property type="match status" value="1"/>
</dbReference>
<dbReference type="PIRSF" id="PIRSF037677">
    <property type="entry name" value="DNA_mis_repair_Msh6"/>
    <property type="match status" value="1"/>
</dbReference>
<dbReference type="SMART" id="SM00534">
    <property type="entry name" value="MUTSac"/>
    <property type="match status" value="1"/>
</dbReference>
<dbReference type="SMART" id="SM00533">
    <property type="entry name" value="MUTSd"/>
    <property type="match status" value="1"/>
</dbReference>
<dbReference type="SUPFAM" id="SSF55271">
    <property type="entry name" value="DNA repair protein MutS, domain I"/>
    <property type="match status" value="1"/>
</dbReference>
<dbReference type="SUPFAM" id="SSF53150">
    <property type="entry name" value="DNA repair protein MutS, domain II"/>
    <property type="match status" value="1"/>
</dbReference>
<dbReference type="SUPFAM" id="SSF48334">
    <property type="entry name" value="DNA repair protein MutS, domain III"/>
    <property type="match status" value="1"/>
</dbReference>
<dbReference type="SUPFAM" id="SSF52540">
    <property type="entry name" value="P-loop containing nucleoside triphosphate hydrolases"/>
    <property type="match status" value="1"/>
</dbReference>
<dbReference type="PROSITE" id="PS00486">
    <property type="entry name" value="DNA_MISMATCH_REPAIR_2"/>
    <property type="match status" value="1"/>
</dbReference>
<feature type="chain" id="PRO_1000202746" description="DNA mismatch repair protein MutS">
    <location>
        <begin position="1"/>
        <end position="885"/>
    </location>
</feature>
<feature type="binding site" evidence="1">
    <location>
        <begin position="640"/>
        <end position="647"/>
    </location>
    <ligand>
        <name>ATP</name>
        <dbReference type="ChEBI" id="CHEBI:30616"/>
    </ligand>
</feature>
<comment type="function">
    <text evidence="1">This protein is involved in the repair of mismatches in DNA. It is possible that it carries out the mismatch recognition step. This protein has a weak ATPase activity.</text>
</comment>
<comment type="similarity">
    <text evidence="1">Belongs to the DNA mismatch repair MutS family.</text>
</comment>
<protein>
    <recommendedName>
        <fullName evidence="1">DNA mismatch repair protein MutS</fullName>
    </recommendedName>
</protein>
<accession>C5CTL8</accession>
<organism>
    <name type="scientific">Variovorax paradoxus (strain S110)</name>
    <dbReference type="NCBI Taxonomy" id="543728"/>
    <lineage>
        <taxon>Bacteria</taxon>
        <taxon>Pseudomonadati</taxon>
        <taxon>Pseudomonadota</taxon>
        <taxon>Betaproteobacteria</taxon>
        <taxon>Burkholderiales</taxon>
        <taxon>Comamonadaceae</taxon>
        <taxon>Variovorax</taxon>
    </lineage>
</organism>
<gene>
    <name evidence="1" type="primary">mutS</name>
    <name type="ordered locus">Vapar_3589</name>
</gene>
<keyword id="KW-0067">ATP-binding</keyword>
<keyword id="KW-0227">DNA damage</keyword>
<keyword id="KW-0234">DNA repair</keyword>
<keyword id="KW-0238">DNA-binding</keyword>
<keyword id="KW-0547">Nucleotide-binding</keyword>
<proteinExistence type="inferred from homology"/>